<evidence type="ECO:0000250" key="1">
    <source>
        <dbReference type="UniProtKB" id="P14867"/>
    </source>
</evidence>
<evidence type="ECO:0000250" key="2">
    <source>
        <dbReference type="UniProtKB" id="P18507"/>
    </source>
</evidence>
<evidence type="ECO:0000250" key="3">
    <source>
        <dbReference type="UniProtKB" id="P22723"/>
    </source>
</evidence>
<evidence type="ECO:0000250" key="4">
    <source>
        <dbReference type="UniProtKB" id="P28472"/>
    </source>
</evidence>
<evidence type="ECO:0000250" key="5">
    <source>
        <dbReference type="UniProtKB" id="P28473"/>
    </source>
</evidence>
<evidence type="ECO:0000255" key="6"/>
<evidence type="ECO:0000269" key="7">
    <source>
    </source>
</evidence>
<evidence type="ECO:0000269" key="8">
    <source>
    </source>
</evidence>
<evidence type="ECO:0000303" key="9">
    <source>
    </source>
</evidence>
<evidence type="ECO:0000303" key="10">
    <source>
    </source>
</evidence>
<evidence type="ECO:0000305" key="11"/>
<evidence type="ECO:0000312" key="12">
    <source>
        <dbReference type="HGNC" id="HGNC:4088"/>
    </source>
</evidence>
<name>GBRG3_HUMAN</name>
<protein>
    <recommendedName>
        <fullName evidence="5">Gamma-aminobutyric acid receptor subunit gamma-3</fullName>
    </recommendedName>
    <alternativeName>
        <fullName evidence="10">GABA(A) receptor subunit gamma-3</fullName>
        <shortName evidence="1">GABAAR subunit gamma-3</shortName>
    </alternativeName>
</protein>
<accession>Q99928</accession>
<accession>G3V594</accession>
<accession>Q9HD46</accession>
<accession>Q9NYT2</accession>
<organism>
    <name type="scientific">Homo sapiens</name>
    <name type="common">Human</name>
    <dbReference type="NCBI Taxonomy" id="9606"/>
    <lineage>
        <taxon>Eukaryota</taxon>
        <taxon>Metazoa</taxon>
        <taxon>Chordata</taxon>
        <taxon>Craniata</taxon>
        <taxon>Vertebrata</taxon>
        <taxon>Euteleostomi</taxon>
        <taxon>Mammalia</taxon>
        <taxon>Eutheria</taxon>
        <taxon>Euarchontoglires</taxon>
        <taxon>Primates</taxon>
        <taxon>Haplorrhini</taxon>
        <taxon>Catarrhini</taxon>
        <taxon>Hominidae</taxon>
        <taxon>Homo</taxon>
    </lineage>
</organism>
<comment type="function">
    <text evidence="2 5">Gamma subunit of the heteropentameric ligand-gated chloride channel gated by gamma-aminobutyric acid (GABA), a major inhibitory neurotransmitter in the brain (By similarity). GABA-gated chloride channels, also named GABA(A) receptors (GABAAR), consist of five subunits arranged around a central pore and contain GABA active binding site(s) located at the alpha and beta subunit interface(s) (By similarity). When activated by GABA, GABAARs selectively allow the flow of chloride across the cell membrane down their electrochemical gradient (By similarity).</text>
</comment>
<comment type="catalytic activity">
    <reaction evidence="5">
        <text>chloride(in) = chloride(out)</text>
        <dbReference type="Rhea" id="RHEA:29823"/>
        <dbReference type="ChEBI" id="CHEBI:17996"/>
    </reaction>
</comment>
<comment type="subunit">
    <text evidence="5">Heteropentamer, formed by a combination of alpha (GABRA1-6), beta (GABRB1-3), gamma (GABRG1-3), delta (GABRD), epsilon (GABRE), rho (GABRR1-3), pi (GABRP) and theta (GABRQ) chains, each subunit exhibiting distinct physiological and pharmacological properties.</text>
</comment>
<comment type="subcellular location">
    <subcellularLocation>
        <location>Postsynaptic cell membrane</location>
        <topology evidence="6">Multi-pass membrane protein</topology>
    </subcellularLocation>
    <subcellularLocation>
        <location>Cell membrane</location>
        <topology evidence="6">Multi-pass membrane protein</topology>
    </subcellularLocation>
</comment>
<comment type="alternative products">
    <event type="alternative splicing"/>
    <isoform>
        <id>Q99928-1</id>
        <name>1</name>
        <sequence type="displayed"/>
    </isoform>
    <isoform>
        <id>Q99928-2</id>
        <name>2</name>
        <sequence type="described" ref="VSP_047543 VSP_047544"/>
    </isoform>
</comment>
<comment type="tissue specificity">
    <text evidence="8">Expressed in brain.</text>
</comment>
<comment type="domain">
    <text evidence="2">GABAARs subunits share a common topological structure: a peptide sequence made up of a long extracellular N-terminal, four transmembrane domains, intracellular or cytoplasmic domain located between the third and the fourth transmembrane domains.</text>
</comment>
<comment type="PTM">
    <text evidence="3">May be palmitoylated.</text>
</comment>
<comment type="similarity">
    <text evidence="11">Belongs to the ligand-gated ion channel (TC 1.A.9) family. Gamma-aminobutyric acid receptor (TC 1.A.9.5) subfamily. GABRG3 sub-subfamily.</text>
</comment>
<comment type="online information" name="Protein Spotlight">
    <link uri="https://www.proteinspotlight.org/back_issues/056"/>
    <text>Forbidden fruit - Issue 56 of March 2005</text>
</comment>
<feature type="signal peptide" evidence="6">
    <location>
        <begin position="1"/>
        <end position="17"/>
    </location>
</feature>
<feature type="chain" id="PRO_0000000481" description="Gamma-aminobutyric acid receptor subunit gamma-3">
    <location>
        <begin position="18"/>
        <end position="467"/>
    </location>
</feature>
<feature type="topological domain" description="Extracellular" evidence="11">
    <location>
        <begin position="18"/>
        <end position="256"/>
    </location>
</feature>
<feature type="transmembrane region" description="Helical" evidence="6">
    <location>
        <begin position="257"/>
        <end position="277"/>
    </location>
</feature>
<feature type="topological domain" description="Cytoplasmic" evidence="11">
    <location>
        <begin position="278"/>
        <end position="283"/>
    </location>
</feature>
<feature type="transmembrane region" description="Helical" evidence="6">
    <location>
        <begin position="284"/>
        <end position="303"/>
    </location>
</feature>
<feature type="topological domain" description="Extracellular" evidence="11">
    <location>
        <begin position="304"/>
        <end position="311"/>
    </location>
</feature>
<feature type="transmembrane region" description="Helical" evidence="6">
    <location>
        <begin position="312"/>
        <end position="332"/>
    </location>
</feature>
<feature type="topological domain" description="Cytoplasmic" evidence="11">
    <location>
        <begin position="333"/>
        <end position="446"/>
    </location>
</feature>
<feature type="transmembrane region" description="Helical" evidence="6">
    <location>
        <begin position="447"/>
        <end position="467"/>
    </location>
</feature>
<feature type="glycosylation site" description="N-linked (GlcNAc...) asparagine" evidence="6">
    <location>
        <position position="110"/>
    </location>
</feature>
<feature type="glycosylation site" description="N-linked (GlcNAc...) asparagine" evidence="6">
    <location>
        <position position="228"/>
    </location>
</feature>
<feature type="disulfide bond" evidence="4">
    <location>
        <begin position="171"/>
        <end position="185"/>
    </location>
</feature>
<feature type="splice variant" id="VSP_047543" description="In isoform 2." evidence="9">
    <original>DYVVMTIYFELSRRM</original>
    <variation>RNLLKEAQLSKAREA</variation>
    <location>
        <begin position="239"/>
        <end position="253"/>
    </location>
</feature>
<feature type="splice variant" id="VSP_047544" description="In isoform 2." evidence="9">
    <location>
        <begin position="254"/>
        <end position="467"/>
    </location>
</feature>
<feature type="sequence variant" id="VAR_033957" description="Found in a patient with MRT52; uncertain significance; dbSNP:rs2066712." evidence="7">
    <original>T</original>
    <variation>A</variation>
    <location>
        <position position="352"/>
    </location>
</feature>
<feature type="sequence conflict" description="In Ref. 5; BC045709." evidence="11" ref="5">
    <original>Q</original>
    <variation>R</variation>
    <location>
        <position position="172"/>
    </location>
</feature>
<feature type="sequence conflict" description="In Ref. 1; AAB39369." evidence="11" ref="1">
    <original>T</original>
    <variation>P</variation>
    <location>
        <position position="386"/>
    </location>
</feature>
<keyword id="KW-0025">Alternative splicing</keyword>
<keyword id="KW-1003">Cell membrane</keyword>
<keyword id="KW-0868">Chloride</keyword>
<keyword id="KW-0869">Chloride channel</keyword>
<keyword id="KW-1015">Disulfide bond</keyword>
<keyword id="KW-0325">Glycoprotein</keyword>
<keyword id="KW-0407">Ion channel</keyword>
<keyword id="KW-0406">Ion transport</keyword>
<keyword id="KW-0449">Lipoprotein</keyword>
<keyword id="KW-0472">Membrane</keyword>
<keyword id="KW-0564">Palmitate</keyword>
<keyword id="KW-0628">Postsynaptic cell membrane</keyword>
<keyword id="KW-1185">Reference proteome</keyword>
<keyword id="KW-0732">Signal</keyword>
<keyword id="KW-0770">Synapse</keyword>
<keyword id="KW-0812">Transmembrane</keyword>
<keyword id="KW-1133">Transmembrane helix</keyword>
<keyword id="KW-0813">Transport</keyword>
<dbReference type="EMBL" id="S82769">
    <property type="protein sequence ID" value="AAB39369.1"/>
    <property type="molecule type" value="mRNA"/>
</dbReference>
<dbReference type="EMBL" id="AF269144">
    <property type="protein sequence ID" value="AAF99698.1"/>
    <property type="molecule type" value="Genomic_DNA"/>
</dbReference>
<dbReference type="EMBL" id="AF269135">
    <property type="protein sequence ID" value="AAF99698.1"/>
    <property type="status" value="JOINED"/>
    <property type="molecule type" value="Genomic_DNA"/>
</dbReference>
<dbReference type="EMBL" id="AF269136">
    <property type="protein sequence ID" value="AAF99698.1"/>
    <property type="status" value="JOINED"/>
    <property type="molecule type" value="Genomic_DNA"/>
</dbReference>
<dbReference type="EMBL" id="AF269137">
    <property type="protein sequence ID" value="AAF99698.1"/>
    <property type="status" value="JOINED"/>
    <property type="molecule type" value="Genomic_DNA"/>
</dbReference>
<dbReference type="EMBL" id="AF269138">
    <property type="protein sequence ID" value="AAF99698.1"/>
    <property type="status" value="JOINED"/>
    <property type="molecule type" value="Genomic_DNA"/>
</dbReference>
<dbReference type="EMBL" id="AF269139">
    <property type="protein sequence ID" value="AAF99698.1"/>
    <property type="status" value="JOINED"/>
    <property type="molecule type" value="Genomic_DNA"/>
</dbReference>
<dbReference type="EMBL" id="AF269140">
    <property type="protein sequence ID" value="AAF99698.1"/>
    <property type="status" value="JOINED"/>
    <property type="molecule type" value="Genomic_DNA"/>
</dbReference>
<dbReference type="EMBL" id="AF269141">
    <property type="protein sequence ID" value="AAF99698.1"/>
    <property type="status" value="JOINED"/>
    <property type="molecule type" value="Genomic_DNA"/>
</dbReference>
<dbReference type="EMBL" id="AF269142">
    <property type="protein sequence ID" value="AAF99698.1"/>
    <property type="status" value="JOINED"/>
    <property type="molecule type" value="Genomic_DNA"/>
</dbReference>
<dbReference type="EMBL" id="AF269143">
    <property type="protein sequence ID" value="AAF99698.1"/>
    <property type="status" value="JOINED"/>
    <property type="molecule type" value="Genomic_DNA"/>
</dbReference>
<dbReference type="EMBL" id="AC104002">
    <property type="status" value="NOT_ANNOTATED_CDS"/>
    <property type="molecule type" value="Genomic_DNA"/>
</dbReference>
<dbReference type="EMBL" id="AC127511">
    <property type="status" value="NOT_ANNOTATED_CDS"/>
    <property type="molecule type" value="Genomic_DNA"/>
</dbReference>
<dbReference type="EMBL" id="AC135326">
    <property type="status" value="NOT_ANNOTATED_CDS"/>
    <property type="molecule type" value="Genomic_DNA"/>
</dbReference>
<dbReference type="EMBL" id="AC136896">
    <property type="status" value="NOT_ANNOTATED_CDS"/>
    <property type="molecule type" value="Genomic_DNA"/>
</dbReference>
<dbReference type="EMBL" id="AC144833">
    <property type="status" value="NOT_ANNOTATED_CDS"/>
    <property type="molecule type" value="Genomic_DNA"/>
</dbReference>
<dbReference type="EMBL" id="AC145436">
    <property type="status" value="NOT_ANNOTATED_CDS"/>
    <property type="molecule type" value="Genomic_DNA"/>
</dbReference>
<dbReference type="EMBL" id="EU606049">
    <property type="status" value="NOT_ANNOTATED_CDS"/>
    <property type="molecule type" value="Genomic_DNA"/>
</dbReference>
<dbReference type="EMBL" id="CH471151">
    <property type="protein sequence ID" value="EAW57658.1"/>
    <property type="molecule type" value="Genomic_DNA"/>
</dbReference>
<dbReference type="EMBL" id="BC045709">
    <property type="status" value="NOT_ANNOTATED_CDS"/>
    <property type="molecule type" value="mRNA"/>
</dbReference>
<dbReference type="EMBL" id="AH009226">
    <property type="protein sequence ID" value="AAF63215.1"/>
    <property type="molecule type" value="Genomic_DNA"/>
</dbReference>
<dbReference type="CCDS" id="CCDS45195.1">
    <molecule id="Q99928-1"/>
</dbReference>
<dbReference type="CCDS" id="CCDS59251.1">
    <molecule id="Q99928-2"/>
</dbReference>
<dbReference type="RefSeq" id="NP_001257802.1">
    <molecule id="Q99928-2"/>
    <property type="nucleotide sequence ID" value="NM_001270873.2"/>
</dbReference>
<dbReference type="RefSeq" id="NP_150092.2">
    <molecule id="Q99928-1"/>
    <property type="nucleotide sequence ID" value="NM_033223.5"/>
</dbReference>
<dbReference type="SMR" id="Q99928"/>
<dbReference type="BioGRID" id="108841">
    <property type="interactions" value="4"/>
</dbReference>
<dbReference type="ComplexPortal" id="CPX-8575">
    <property type="entry name" value="GABA-A receptor, alpha5-beta3-gamma3"/>
</dbReference>
<dbReference type="ComplexPortal" id="CPX-8579">
    <property type="entry name" value="GABA-A receptor, alpha3-beta3-gamma3"/>
</dbReference>
<dbReference type="FunCoup" id="Q99928">
    <property type="interactions" value="521"/>
</dbReference>
<dbReference type="STRING" id="9606.ENSP00000479113"/>
<dbReference type="ChEMBL" id="CHEMBL3885573"/>
<dbReference type="ChEMBL" id="CHEMBL3885577"/>
<dbReference type="DrugBank" id="DB12537">
    <property type="generic name" value="1,2-Benzodiazepine"/>
</dbReference>
<dbReference type="DrugBank" id="DB00546">
    <property type="generic name" value="Adinazolam"/>
</dbReference>
<dbReference type="DrugBank" id="DB06579">
    <property type="generic name" value="Adipiplon"/>
</dbReference>
<dbReference type="DrugBank" id="DB00404">
    <property type="generic name" value="Alprazolam"/>
</dbReference>
<dbReference type="DrugBank" id="DB00543">
    <property type="generic name" value="Amoxapine"/>
</dbReference>
<dbReference type="DrugBank" id="DB11901">
    <property type="generic name" value="Apalutamide"/>
</dbReference>
<dbReference type="DrugBank" id="DB08892">
    <property type="generic name" value="Arbaclofen Placarbil"/>
</dbReference>
<dbReference type="DrugBank" id="DB12576">
    <property type="generic name" value="AZD-3043"/>
</dbReference>
<dbReference type="DrugBank" id="DB14719">
    <property type="generic name" value="Bentazepam"/>
</dbReference>
<dbReference type="DrugBank" id="DB11859">
    <property type="generic name" value="Brexanolone"/>
</dbReference>
<dbReference type="DrugBank" id="DB01558">
    <property type="generic name" value="Bromazepam"/>
</dbReference>
<dbReference type="DrugBank" id="DB09017">
    <property type="generic name" value="Brotizolam"/>
</dbReference>
<dbReference type="DrugBank" id="DB00237">
    <property type="generic name" value="Butabarbital"/>
</dbReference>
<dbReference type="DrugBank" id="DB00241">
    <property type="generic name" value="Butalbital"/>
</dbReference>
<dbReference type="DrugBank" id="DB01489">
    <property type="generic name" value="Camazepam"/>
</dbReference>
<dbReference type="DrugBank" id="DB00475">
    <property type="generic name" value="Chlordiazepoxide"/>
</dbReference>
<dbReference type="DrugBank" id="DB14715">
    <property type="generic name" value="Cinazepam"/>
</dbReference>
<dbReference type="DrugBank" id="DB01594">
    <property type="generic name" value="Cinolazepam"/>
</dbReference>
<dbReference type="DrugBank" id="DB00349">
    <property type="generic name" value="Clobazam"/>
</dbReference>
<dbReference type="DrugBank" id="DB06470">
    <property type="generic name" value="Clomethiazole"/>
</dbReference>
<dbReference type="DrugBank" id="DB01068">
    <property type="generic name" value="Clonazepam"/>
</dbReference>
<dbReference type="DrugBank" id="DB00628">
    <property type="generic name" value="Clorazepic acid"/>
</dbReference>
<dbReference type="DrugBank" id="DB01559">
    <property type="generic name" value="Clotiazepam"/>
</dbReference>
<dbReference type="DrugBank" id="DB01553">
    <property type="generic name" value="Cloxazolam"/>
</dbReference>
<dbReference type="DrugBank" id="DB01511">
    <property type="generic name" value="Delorazepam"/>
</dbReference>
<dbReference type="DrugBank" id="DB01189">
    <property type="generic name" value="Desflurane"/>
</dbReference>
<dbReference type="DrugBank" id="DB00829">
    <property type="generic name" value="Diazepam"/>
</dbReference>
<dbReference type="DrugBank" id="DB13837">
    <property type="generic name" value="Doxefazepam"/>
</dbReference>
<dbReference type="DrugBank" id="DB00228">
    <property type="generic name" value="Enflurane"/>
</dbReference>
<dbReference type="DrugBank" id="DB01215">
    <property type="generic name" value="Estazolam"/>
</dbReference>
<dbReference type="DrugBank" id="DB00402">
    <property type="generic name" value="Eszopiclone"/>
</dbReference>
<dbReference type="DrugBank" id="DB00898">
    <property type="generic name" value="Ethanol"/>
</dbReference>
<dbReference type="DrugBank" id="DB00189">
    <property type="generic name" value="Ethchlorvynol"/>
</dbReference>
<dbReference type="DrugBank" id="DB01545">
    <property type="generic name" value="Ethyl loflazepate"/>
</dbReference>
<dbReference type="DrugBank" id="DB09166">
    <property type="generic name" value="Etizolam"/>
</dbReference>
<dbReference type="DrugBank" id="DB00292">
    <property type="generic name" value="Etomidate"/>
</dbReference>
<dbReference type="DrugBank" id="DB05721">
    <property type="generic name" value="EVT 201"/>
</dbReference>
<dbReference type="DrugBank" id="DB01567">
    <property type="generic name" value="Fludiazepam"/>
</dbReference>
<dbReference type="DrugBank" id="DB01205">
    <property type="generic name" value="Flumazenil"/>
</dbReference>
<dbReference type="DrugBank" id="DB01544">
    <property type="generic name" value="Flunitrazepam"/>
</dbReference>
<dbReference type="DrugBank" id="DB00690">
    <property type="generic name" value="Flurazepam"/>
</dbReference>
<dbReference type="DrugBank" id="DB05087">
    <property type="generic name" value="Ganaxolone"/>
</dbReference>
<dbReference type="DrugBank" id="DB01437">
    <property type="generic name" value="Glutethimide"/>
</dbReference>
<dbReference type="DrugBank" id="DB00801">
    <property type="generic name" value="Halazepam"/>
</dbReference>
<dbReference type="DrugBank" id="DB01159">
    <property type="generic name" value="Halothane"/>
</dbReference>
<dbReference type="DrugBank" id="DB00753">
    <property type="generic name" value="Isoflurane"/>
</dbReference>
<dbReference type="DrugBank" id="DB01587">
    <property type="generic name" value="Ketazolam"/>
</dbReference>
<dbReference type="DrugBank" id="DB00555">
    <property type="generic name" value="Lamotrigine"/>
</dbReference>
<dbReference type="DrugBank" id="DB13643">
    <property type="generic name" value="Loprazolam"/>
</dbReference>
<dbReference type="DrugBank" id="DB00186">
    <property type="generic name" value="Lorazepam"/>
</dbReference>
<dbReference type="DrugBank" id="DB13872">
    <property type="generic name" value="Lormetazepam"/>
</dbReference>
<dbReference type="DrugBank" id="DB06797">
    <property type="generic name" value="Mebutamate"/>
</dbReference>
<dbReference type="DrugBank" id="DB13437">
    <property type="generic name" value="Medazepam"/>
</dbReference>
<dbReference type="DrugBank" id="DB00603">
    <property type="generic name" value="Medroxyprogesterone acetate"/>
</dbReference>
<dbReference type="DrugBank" id="DB01043">
    <property type="generic name" value="Memantine"/>
</dbReference>
<dbReference type="DrugBank" id="DB00371">
    <property type="generic name" value="Meprobamate"/>
</dbReference>
<dbReference type="DrugBank" id="DB00463">
    <property type="generic name" value="Metharbital"/>
</dbReference>
<dbReference type="DrugBank" id="DB01028">
    <property type="generic name" value="Methoxyflurane"/>
</dbReference>
<dbReference type="DrugBank" id="DB01107">
    <property type="generic name" value="Methyprylon"/>
</dbReference>
<dbReference type="DrugBank" id="DB15489">
    <property type="generic name" value="Mexazolam"/>
</dbReference>
<dbReference type="DrugBank" id="DB00683">
    <property type="generic name" value="Midazolam"/>
</dbReference>
<dbReference type="DrugBank" id="DB01595">
    <property type="generic name" value="Nitrazepam"/>
</dbReference>
<dbReference type="DrugBank" id="DB14028">
    <property type="generic name" value="Nordazepam"/>
</dbReference>
<dbReference type="DrugBank" id="DB06529">
    <property type="generic name" value="Ocinaplon"/>
</dbReference>
<dbReference type="DrugBank" id="DB00334">
    <property type="generic name" value="Olanzapine"/>
</dbReference>
<dbReference type="DrugBank" id="DB12312">
    <property type="generic name" value="ORG-25435"/>
</dbReference>
<dbReference type="DrugBank" id="DB00842">
    <property type="generic name" value="Oxazepam"/>
</dbReference>
<dbReference type="DrugBank" id="DB14672">
    <property type="generic name" value="Oxazepam acetate"/>
</dbReference>
<dbReference type="DrugBank" id="DB04903">
    <property type="generic name" value="Pagoclone"/>
</dbReference>
<dbReference type="DrugBank" id="DB00312">
    <property type="generic name" value="Pentobarbital"/>
</dbReference>
<dbReference type="DrugBank" id="DB00252">
    <property type="generic name" value="Phenytoin"/>
</dbReference>
<dbReference type="DrugBank" id="DB13335">
    <property type="generic name" value="Pinazepam"/>
</dbReference>
<dbReference type="DrugBank" id="DB01708">
    <property type="generic name" value="Prasterone"/>
</dbReference>
<dbReference type="DrugBank" id="DB01588">
    <property type="generic name" value="Prazepam"/>
</dbReference>
<dbReference type="DrugBank" id="DB00794">
    <property type="generic name" value="Primidone"/>
</dbReference>
<dbReference type="DrugBank" id="DB00818">
    <property type="generic name" value="Propofol"/>
</dbReference>
<dbReference type="DrugBank" id="DB01589">
    <property type="generic name" value="Quazepam"/>
</dbReference>
<dbReference type="DrugBank" id="DB12404">
    <property type="generic name" value="Remimazolam"/>
</dbReference>
<dbReference type="DrugBank" id="DB01236">
    <property type="generic name" value="Sevoflurane"/>
</dbReference>
<dbReference type="DrugBank" id="DB09118">
    <property type="generic name" value="Stiripentol"/>
</dbReference>
<dbReference type="DrugBank" id="DB00306">
    <property type="generic name" value="Talbutal"/>
</dbReference>
<dbReference type="DrugBank" id="DB01956">
    <property type="generic name" value="Taurine"/>
</dbReference>
<dbReference type="DrugBank" id="DB00231">
    <property type="generic name" value="Temazepam"/>
</dbReference>
<dbReference type="DrugBank" id="DB01154">
    <property type="generic name" value="Thiamylal"/>
</dbReference>
<dbReference type="DrugBank" id="DB11582">
    <property type="generic name" value="Thiocolchicoside"/>
</dbReference>
<dbReference type="DrugBank" id="DB00897">
    <property type="generic name" value="Triazolam"/>
</dbReference>
<dbReference type="DrugBank" id="DB00425">
    <property type="generic name" value="Zolpidem"/>
</dbReference>
<dbReference type="DrugBank" id="DB00909">
    <property type="generic name" value="Zonisamide"/>
</dbReference>
<dbReference type="DrugBank" id="DB15490">
    <property type="generic name" value="Zuranolone"/>
</dbReference>
<dbReference type="DrugCentral" id="Q99928"/>
<dbReference type="GlyCosmos" id="Q99928">
    <property type="glycosylation" value="2 sites, No reported glycans"/>
</dbReference>
<dbReference type="GlyGen" id="Q99928">
    <property type="glycosylation" value="2 sites"/>
</dbReference>
<dbReference type="iPTMnet" id="Q99928"/>
<dbReference type="PhosphoSitePlus" id="Q99928"/>
<dbReference type="BioMuta" id="GABRG3"/>
<dbReference type="DMDM" id="13959689"/>
<dbReference type="MassIVE" id="Q99928"/>
<dbReference type="PaxDb" id="9606-ENSP00000479113"/>
<dbReference type="PeptideAtlas" id="Q99928"/>
<dbReference type="ProteomicsDB" id="33459"/>
<dbReference type="ProteomicsDB" id="78522">
    <molecule id="Q99928-1"/>
</dbReference>
<dbReference type="Antibodypedia" id="5045">
    <property type="antibodies" value="98 antibodies from 18 providers"/>
</dbReference>
<dbReference type="DNASU" id="2567"/>
<dbReference type="Ensembl" id="ENST00000555083.5">
    <molecule id="Q99928-2"/>
    <property type="protein sequence ID" value="ENSP00000452244.1"/>
    <property type="gene ID" value="ENSG00000182256.13"/>
</dbReference>
<dbReference type="Ensembl" id="ENST00000615808.5">
    <molecule id="Q99928-1"/>
    <property type="protein sequence ID" value="ENSP00000479113.1"/>
    <property type="gene ID" value="ENSG00000182256.13"/>
</dbReference>
<dbReference type="GeneID" id="2567"/>
<dbReference type="KEGG" id="hsa:2567"/>
<dbReference type="MANE-Select" id="ENST00000615808.5">
    <property type="protein sequence ID" value="ENSP00000479113.1"/>
    <property type="RefSeq nucleotide sequence ID" value="NM_033223.5"/>
    <property type="RefSeq protein sequence ID" value="NP_150092.2"/>
</dbReference>
<dbReference type="UCSC" id="uc001zbf.5">
    <molecule id="Q99928-1"/>
    <property type="organism name" value="human"/>
</dbReference>
<dbReference type="AGR" id="HGNC:4088"/>
<dbReference type="CTD" id="2567"/>
<dbReference type="DisGeNET" id="2567"/>
<dbReference type="GeneCards" id="GABRG3"/>
<dbReference type="GeneReviews" id="GABRG3"/>
<dbReference type="HGNC" id="HGNC:4088">
    <property type="gene designation" value="GABRG3"/>
</dbReference>
<dbReference type="HPA" id="ENSG00000182256">
    <property type="expression patterns" value="Tissue enhanced (retina, testis)"/>
</dbReference>
<dbReference type="MalaCards" id="GABRG3"/>
<dbReference type="MIM" id="600233">
    <property type="type" value="gene"/>
</dbReference>
<dbReference type="neXtProt" id="NX_Q99928"/>
<dbReference type="OpenTargets" id="ENSG00000182256"/>
<dbReference type="PharmGKB" id="PA28502"/>
<dbReference type="VEuPathDB" id="HostDB:ENSG00000182256"/>
<dbReference type="eggNOG" id="KOG3642">
    <property type="taxonomic scope" value="Eukaryota"/>
</dbReference>
<dbReference type="GeneTree" id="ENSGT00940000155607"/>
<dbReference type="HOGENOM" id="CLU_010920_2_0_1"/>
<dbReference type="InParanoid" id="Q99928"/>
<dbReference type="OMA" id="PREEMVY"/>
<dbReference type="OrthoDB" id="203862at2759"/>
<dbReference type="PAN-GO" id="Q99928">
    <property type="GO annotations" value="19 GO annotations based on evolutionary models"/>
</dbReference>
<dbReference type="PhylomeDB" id="Q99928"/>
<dbReference type="TreeFam" id="TF315453"/>
<dbReference type="PathwayCommons" id="Q99928"/>
<dbReference type="Reactome" id="R-HSA-1236394">
    <property type="pathway name" value="Signaling by ERBB4"/>
</dbReference>
<dbReference type="Reactome" id="R-HSA-977443">
    <property type="pathway name" value="GABA receptor activation"/>
</dbReference>
<dbReference type="SignaLink" id="Q99928"/>
<dbReference type="BioGRID-ORCS" id="2567">
    <property type="hits" value="12 hits in 1167 CRISPR screens"/>
</dbReference>
<dbReference type="ChiTaRS" id="GABRG3">
    <property type="organism name" value="human"/>
</dbReference>
<dbReference type="GeneWiki" id="GABRG3"/>
<dbReference type="GenomeRNAi" id="2567"/>
<dbReference type="Pharos" id="Q99928">
    <property type="development level" value="Tclin"/>
</dbReference>
<dbReference type="PRO" id="PR:Q99928"/>
<dbReference type="Proteomes" id="UP000005640">
    <property type="component" value="Chromosome 15"/>
</dbReference>
<dbReference type="RNAct" id="Q99928">
    <property type="molecule type" value="protein"/>
</dbReference>
<dbReference type="Bgee" id="ENSG00000182256">
    <property type="expression patterns" value="Expressed in male germ line stem cell (sensu Vertebrata) in testis and 79 other cell types or tissues"/>
</dbReference>
<dbReference type="ExpressionAtlas" id="Q99928">
    <property type="expression patterns" value="baseline and differential"/>
</dbReference>
<dbReference type="GO" id="GO:0034707">
    <property type="term" value="C:chloride channel complex"/>
    <property type="evidence" value="ECO:0007669"/>
    <property type="project" value="UniProtKB-KW"/>
</dbReference>
<dbReference type="GO" id="GO:0032590">
    <property type="term" value="C:dendrite membrane"/>
    <property type="evidence" value="ECO:0000318"/>
    <property type="project" value="GO_Central"/>
</dbReference>
<dbReference type="GO" id="GO:1902711">
    <property type="term" value="C:GABA-A receptor complex"/>
    <property type="evidence" value="ECO:0000318"/>
    <property type="project" value="GO_Central"/>
</dbReference>
<dbReference type="GO" id="GO:0098982">
    <property type="term" value="C:GABA-ergic synapse"/>
    <property type="evidence" value="ECO:0007669"/>
    <property type="project" value="Ensembl"/>
</dbReference>
<dbReference type="GO" id="GO:0015630">
    <property type="term" value="C:microtubule cytoskeleton"/>
    <property type="evidence" value="ECO:0000314"/>
    <property type="project" value="HPA"/>
</dbReference>
<dbReference type="GO" id="GO:0005730">
    <property type="term" value="C:nucleolus"/>
    <property type="evidence" value="ECO:0000314"/>
    <property type="project" value="HPA"/>
</dbReference>
<dbReference type="GO" id="GO:0005886">
    <property type="term" value="C:plasma membrane"/>
    <property type="evidence" value="ECO:0000314"/>
    <property type="project" value="HPA"/>
</dbReference>
<dbReference type="GO" id="GO:0098794">
    <property type="term" value="C:postsynapse"/>
    <property type="evidence" value="ECO:0000318"/>
    <property type="project" value="GO_Central"/>
</dbReference>
<dbReference type="GO" id="GO:0045211">
    <property type="term" value="C:postsynaptic membrane"/>
    <property type="evidence" value="ECO:0007669"/>
    <property type="project" value="UniProtKB-SubCell"/>
</dbReference>
<dbReference type="GO" id="GO:0004890">
    <property type="term" value="F:GABA-A receptor activity"/>
    <property type="evidence" value="ECO:0000250"/>
    <property type="project" value="UniProtKB"/>
</dbReference>
<dbReference type="GO" id="GO:0022851">
    <property type="term" value="F:GABA-gated chloride ion channel activity"/>
    <property type="evidence" value="ECO:0000250"/>
    <property type="project" value="UniProtKB"/>
</dbReference>
<dbReference type="GO" id="GO:1904315">
    <property type="term" value="F:transmitter-gated monoatomic ion channel activity involved in regulation of postsynaptic membrane potential"/>
    <property type="evidence" value="ECO:0007669"/>
    <property type="project" value="Ensembl"/>
</dbReference>
<dbReference type="GO" id="GO:1902476">
    <property type="term" value="P:chloride transmembrane transport"/>
    <property type="evidence" value="ECO:0000318"/>
    <property type="project" value="GO_Central"/>
</dbReference>
<dbReference type="GO" id="GO:0007214">
    <property type="term" value="P:gamma-aminobutyric acid signaling pathway"/>
    <property type="evidence" value="ECO:0000318"/>
    <property type="project" value="GO_Central"/>
</dbReference>
<dbReference type="GO" id="GO:1904862">
    <property type="term" value="P:inhibitory synapse assembly"/>
    <property type="evidence" value="ECO:0000318"/>
    <property type="project" value="GO_Central"/>
</dbReference>
<dbReference type="GO" id="GO:0009410">
    <property type="term" value="P:response to xenobiotic stimulus"/>
    <property type="evidence" value="ECO:0007669"/>
    <property type="project" value="Ensembl"/>
</dbReference>
<dbReference type="GO" id="GO:0051932">
    <property type="term" value="P:synaptic transmission, GABAergic"/>
    <property type="evidence" value="ECO:0000318"/>
    <property type="project" value="GO_Central"/>
</dbReference>
<dbReference type="CDD" id="cd19000">
    <property type="entry name" value="LGIC_ECD_GABAAR_G"/>
    <property type="match status" value="1"/>
</dbReference>
<dbReference type="CDD" id="cd19054">
    <property type="entry name" value="LGIC_TM_GABAAR_gamma"/>
    <property type="match status" value="1"/>
</dbReference>
<dbReference type="FunFam" id="1.20.58.390:FF:000006">
    <property type="entry name" value="Putative gamma-aminobutyric acid receptor subunit gamma-2"/>
    <property type="match status" value="1"/>
</dbReference>
<dbReference type="FunFam" id="2.70.170.10:FF:000003">
    <property type="entry name" value="Putative gamma-aminobutyric acid receptor subunit gamma-2"/>
    <property type="match status" value="1"/>
</dbReference>
<dbReference type="Gene3D" id="2.70.170.10">
    <property type="entry name" value="Neurotransmitter-gated ion-channel ligand-binding domain"/>
    <property type="match status" value="1"/>
</dbReference>
<dbReference type="Gene3D" id="1.20.58.390">
    <property type="entry name" value="Neurotransmitter-gated ion-channel transmembrane domain"/>
    <property type="match status" value="1"/>
</dbReference>
<dbReference type="InterPro" id="IPR006028">
    <property type="entry name" value="GABAA/Glycine_rcpt"/>
</dbReference>
<dbReference type="InterPro" id="IPR005440">
    <property type="entry name" value="GABBAg3_rcpt"/>
</dbReference>
<dbReference type="InterPro" id="IPR005437">
    <property type="entry name" value="GABRG-1/4"/>
</dbReference>
<dbReference type="InterPro" id="IPR006202">
    <property type="entry name" value="Neur_chan_lig-bd"/>
</dbReference>
<dbReference type="InterPro" id="IPR036734">
    <property type="entry name" value="Neur_chan_lig-bd_sf"/>
</dbReference>
<dbReference type="InterPro" id="IPR006201">
    <property type="entry name" value="Neur_channel"/>
</dbReference>
<dbReference type="InterPro" id="IPR036719">
    <property type="entry name" value="Neuro-gated_channel_TM_sf"/>
</dbReference>
<dbReference type="InterPro" id="IPR038050">
    <property type="entry name" value="Neuro_actylchol_rec"/>
</dbReference>
<dbReference type="InterPro" id="IPR006029">
    <property type="entry name" value="Neurotrans-gated_channel_TM"/>
</dbReference>
<dbReference type="InterPro" id="IPR018000">
    <property type="entry name" value="Neurotransmitter_ion_chnl_CS"/>
</dbReference>
<dbReference type="NCBIfam" id="TIGR00860">
    <property type="entry name" value="LIC"/>
    <property type="match status" value="1"/>
</dbReference>
<dbReference type="PANTHER" id="PTHR18945">
    <property type="entry name" value="NEUROTRANSMITTER GATED ION CHANNEL"/>
    <property type="match status" value="1"/>
</dbReference>
<dbReference type="Pfam" id="PF02931">
    <property type="entry name" value="Neur_chan_LBD"/>
    <property type="match status" value="1"/>
</dbReference>
<dbReference type="Pfam" id="PF02932">
    <property type="entry name" value="Neur_chan_memb"/>
    <property type="match status" value="1"/>
</dbReference>
<dbReference type="PRINTS" id="PR00253">
    <property type="entry name" value="GABAARECEPTR"/>
</dbReference>
<dbReference type="PRINTS" id="PR01620">
    <property type="entry name" value="GABAARGAMMA"/>
</dbReference>
<dbReference type="PRINTS" id="PR01623">
    <property type="entry name" value="GABAARGAMMA3"/>
</dbReference>
<dbReference type="PRINTS" id="PR00252">
    <property type="entry name" value="NRIONCHANNEL"/>
</dbReference>
<dbReference type="SUPFAM" id="SSF90112">
    <property type="entry name" value="Neurotransmitter-gated ion-channel transmembrane pore"/>
    <property type="match status" value="1"/>
</dbReference>
<dbReference type="SUPFAM" id="SSF63712">
    <property type="entry name" value="Nicotinic receptor ligand binding domain-like"/>
    <property type="match status" value="1"/>
</dbReference>
<dbReference type="PROSITE" id="PS00236">
    <property type="entry name" value="NEUROTR_ION_CHANNEL"/>
    <property type="match status" value="1"/>
</dbReference>
<proteinExistence type="evidence at transcript level"/>
<reference key="1">
    <citation type="journal article" date="1995" name="Eur. J. Pharmacol.">
        <title>Expression and pharmacology of human GABAA receptors containing gamma 3 subunits.</title>
        <authorList>
            <person name="Hadingham K.L."/>
            <person name="Wafford K.A."/>
            <person name="Thompson S.A."/>
            <person name="Palmer K.J."/>
            <person name="Whiting P.J."/>
        </authorList>
    </citation>
    <scope>NUCLEOTIDE SEQUENCE [MRNA] (ISOFORM 1)</scope>
    <scope>FUNCTION</scope>
    <source>
        <tissue>Fetal brain</tissue>
    </source>
</reference>
<reference key="2">
    <citation type="submission" date="2000-05" db="EMBL/GenBank/DDBJ databases">
        <title>Gene structure and organization of the GABAA receptor gamma 3 subunit (GABRG3) gene.</title>
        <authorList>
            <person name="Han M.K."/>
            <person name="Chen Y.-H."/>
            <person name="Nurmi E.L."/>
            <person name="Sutcliffe J.S."/>
        </authorList>
    </citation>
    <scope>NUCLEOTIDE SEQUENCE [GENOMIC DNA]</scope>
</reference>
<reference key="3">
    <citation type="journal article" date="2006" name="Nature">
        <title>Analysis of the DNA sequence and duplication history of human chromosome 15.</title>
        <authorList>
            <person name="Zody M.C."/>
            <person name="Garber M."/>
            <person name="Sharpe T."/>
            <person name="Young S.K."/>
            <person name="Rowen L."/>
            <person name="O'Neill K."/>
            <person name="Whittaker C.A."/>
            <person name="Kamal M."/>
            <person name="Chang J.L."/>
            <person name="Cuomo C.A."/>
            <person name="Dewar K."/>
            <person name="FitzGerald M.G."/>
            <person name="Kodira C.D."/>
            <person name="Madan A."/>
            <person name="Qin S."/>
            <person name="Yang X."/>
            <person name="Abbasi N."/>
            <person name="Abouelleil A."/>
            <person name="Arachchi H.M."/>
            <person name="Baradarani L."/>
            <person name="Birditt B."/>
            <person name="Bloom S."/>
            <person name="Bloom T."/>
            <person name="Borowsky M.L."/>
            <person name="Burke J."/>
            <person name="Butler J."/>
            <person name="Cook A."/>
            <person name="DeArellano K."/>
            <person name="DeCaprio D."/>
            <person name="Dorris L. III"/>
            <person name="Dors M."/>
            <person name="Eichler E.E."/>
            <person name="Engels R."/>
            <person name="Fahey J."/>
            <person name="Fleetwood P."/>
            <person name="Friedman C."/>
            <person name="Gearin G."/>
            <person name="Hall J.L."/>
            <person name="Hensley G."/>
            <person name="Johnson E."/>
            <person name="Jones C."/>
            <person name="Kamat A."/>
            <person name="Kaur A."/>
            <person name="Locke D.P."/>
            <person name="Madan A."/>
            <person name="Munson G."/>
            <person name="Jaffe D.B."/>
            <person name="Lui A."/>
            <person name="Macdonald P."/>
            <person name="Mauceli E."/>
            <person name="Naylor J.W."/>
            <person name="Nesbitt R."/>
            <person name="Nicol R."/>
            <person name="O'Leary S.B."/>
            <person name="Ratcliffe A."/>
            <person name="Rounsley S."/>
            <person name="She X."/>
            <person name="Sneddon K.M.B."/>
            <person name="Stewart S."/>
            <person name="Sougnez C."/>
            <person name="Stone S.M."/>
            <person name="Topham K."/>
            <person name="Vincent D."/>
            <person name="Wang S."/>
            <person name="Zimmer A.R."/>
            <person name="Birren B.W."/>
            <person name="Hood L."/>
            <person name="Lander E.S."/>
            <person name="Nusbaum C."/>
        </authorList>
    </citation>
    <scope>NUCLEOTIDE SEQUENCE [LARGE SCALE GENOMIC DNA]</scope>
</reference>
<reference key="4">
    <citation type="submission" date="2005-07" db="EMBL/GenBank/DDBJ databases">
        <authorList>
            <person name="Mural R.J."/>
            <person name="Istrail S."/>
            <person name="Sutton G."/>
            <person name="Florea L."/>
            <person name="Halpern A.L."/>
            <person name="Mobarry C.M."/>
            <person name="Lippert R."/>
            <person name="Walenz B."/>
            <person name="Shatkay H."/>
            <person name="Dew I."/>
            <person name="Miller J.R."/>
            <person name="Flanigan M.J."/>
            <person name="Edwards N.J."/>
            <person name="Bolanos R."/>
            <person name="Fasulo D."/>
            <person name="Halldorsson B.V."/>
            <person name="Hannenhalli S."/>
            <person name="Turner R."/>
            <person name="Yooseph S."/>
            <person name="Lu F."/>
            <person name="Nusskern D.R."/>
            <person name="Shue B.C."/>
            <person name="Zheng X.H."/>
            <person name="Zhong F."/>
            <person name="Delcher A.L."/>
            <person name="Huson D.H."/>
            <person name="Kravitz S.A."/>
            <person name="Mouchard L."/>
            <person name="Reinert K."/>
            <person name="Remington K.A."/>
            <person name="Clark A.G."/>
            <person name="Waterman M.S."/>
            <person name="Eichler E.E."/>
            <person name="Adams M.D."/>
            <person name="Hunkapiller M.W."/>
            <person name="Myers E.W."/>
            <person name="Venter J.C."/>
        </authorList>
    </citation>
    <scope>NUCLEOTIDE SEQUENCE [LARGE SCALE GENOMIC DNA]</scope>
</reference>
<reference key="5">
    <citation type="journal article" date="2004" name="Genome Res.">
        <title>The status, quality, and expansion of the NIH full-length cDNA project: the Mammalian Gene Collection (MGC).</title>
        <authorList>
            <consortium name="The MGC Project Team"/>
        </authorList>
    </citation>
    <scope>NUCLEOTIDE SEQUENCE [LARGE SCALE MRNA] (ISOFORM 2)</scope>
</reference>
<reference key="6">
    <citation type="submission" date="2000-01" db="EMBL/GenBank/DDBJ databases">
        <title>Genomic organization of GABAA receptor gamma 3 subunit gene (GABRG3).</title>
        <authorList>
            <person name="Kim S.-J."/>
            <person name="Gonen D."/>
            <person name="Yang Z.-Y."/>
            <person name="Reliford A."/>
            <person name="Dy A."/>
            <person name="Leventhal B.L."/>
            <person name="Cook E.H. Jr."/>
        </authorList>
    </citation>
    <scope>NUCLEOTIDE SEQUENCE [GENOMIC DNA] OF 19-467</scope>
</reference>
<reference key="7">
    <citation type="journal article" date="2016" name="J. Med. Genet.">
        <title>Homozygous missense mutation in the LMAN2L gene segregates with intellectual disability in a large consanguineous Pakistani family.</title>
        <authorList>
            <person name="Rafiullah R."/>
            <person name="Aslamkhan M."/>
            <person name="Paramasivam N."/>
            <person name="Thiel C."/>
            <person name="Mustafa G."/>
            <person name="Wiemann S."/>
            <person name="Schlesner M."/>
            <person name="Wade R.C."/>
            <person name="Rappold G.A."/>
            <person name="Berkel S."/>
        </authorList>
    </citation>
    <scope>VARIANT ALA-352</scope>
</reference>
<sequence>MAPKLLLLLCLFSGLHARSRKVEEDEYEDSSSNQKWVLAPKSQDTDVTLILNKLLREYDKKLRPDIGIKPTVIDVDIYVNSIGPVSSINMEYQIDIFFAQTWTDSRLRFNSTMKILTLNSNMVGLIWIPDTIFRNSKTAEAHWITTPNQLLRIWNDGKILYTLRLTINAECQLQLHNFPMDEHSCPLIFSSYGYPKEEMIYRWRKNSVEAADQKSWRLYQFDFMGLRNTTEIVTTSAGDYVVMTIYFELSRRMGYFTIQTYIPCILTVVLSWVSFWIKKDATPARTALGITTVLTMTTLSTIARKSLPRVSYVTAMDLFVTVCFLFVFAALMEYATLNYYSSCRKPTTTKKTTSLLHPDSSRWIPERISLQAPSNYSLLDMRPPPTAMITLNNSVYWQEFEDTCVYECLDGKDCQSFFCCYEECKSGSWRKGRIHIDILELDSYSRVFFPTSFLLFNLVYWVGYLYL</sequence>
<gene>
    <name evidence="12" type="primary">GABRG3</name>
</gene>